<feature type="chain" id="PRO_0000086671" description="Serine/threonine-protein kinase spk-1">
    <location>
        <begin position="1"/>
        <end position="1132"/>
    </location>
</feature>
<feature type="transmembrane region" description="Helical" evidence="3">
    <location>
        <begin position="75"/>
        <end position="95"/>
    </location>
</feature>
<feature type="domain" description="Protein kinase" evidence="4">
    <location>
        <begin position="495"/>
        <end position="1044"/>
    </location>
</feature>
<feature type="region of interest" description="Disordered" evidence="6">
    <location>
        <begin position="240"/>
        <end position="388"/>
    </location>
</feature>
<feature type="region of interest" description="Disordered" evidence="6">
    <location>
        <begin position="419"/>
        <end position="481"/>
    </location>
</feature>
<feature type="region of interest" description="Disordered" evidence="6">
    <location>
        <begin position="1066"/>
        <end position="1121"/>
    </location>
</feature>
<feature type="compositionally biased region" description="Acidic residues" evidence="6">
    <location>
        <begin position="281"/>
        <end position="290"/>
    </location>
</feature>
<feature type="compositionally biased region" description="Acidic residues" evidence="6">
    <location>
        <begin position="311"/>
        <end position="336"/>
    </location>
</feature>
<feature type="compositionally biased region" description="Low complexity" evidence="6">
    <location>
        <begin position="362"/>
        <end position="372"/>
    </location>
</feature>
<feature type="compositionally biased region" description="Acidic residues" evidence="6">
    <location>
        <begin position="373"/>
        <end position="388"/>
    </location>
</feature>
<feature type="compositionally biased region" description="Basic and acidic residues" evidence="6">
    <location>
        <begin position="421"/>
        <end position="433"/>
    </location>
</feature>
<feature type="compositionally biased region" description="Low complexity" evidence="6">
    <location>
        <begin position="434"/>
        <end position="443"/>
    </location>
</feature>
<feature type="compositionally biased region" description="Low complexity" evidence="6">
    <location>
        <begin position="1084"/>
        <end position="1096"/>
    </location>
</feature>
<feature type="active site" description="Proton acceptor" evidence="4 5">
    <location>
        <position position="628"/>
    </location>
</feature>
<feature type="binding site" evidence="4">
    <location>
        <begin position="501"/>
        <end position="509"/>
    </location>
    <ligand>
        <name>ATP</name>
        <dbReference type="ChEBI" id="CHEBI:30616"/>
    </ligand>
</feature>
<feature type="binding site" evidence="4">
    <location>
        <position position="524"/>
    </location>
    <ligand>
        <name>ATP</name>
        <dbReference type="ChEBI" id="CHEBI:30616"/>
    </ligand>
</feature>
<sequence length="1132" mass="126200">MLSILHSLSWMAHWINPTATIAPSTPPQAGEKNANVKNGTVQTNGVNHTERLAGRAPNLLHPAIDYPGITSYEAGGSLILTDIFPTVLFMFVVLFCRWFNGFAPRQERFQRLEYEAILRRRRFRVQSEESEELEDHEAYSETDICTQLIASSANVACNINVDLVNQNRFYFFVKQNNEDETAVPSDVPPPETSIKNEDTEVNLVFASAEDNGYISSTFEVSETSLMVTSEVYEVEKVSVNEDQSSRPVNVIVNESDDEQSLRSQDGSRCSDEAMNSCMSASEDEDVESQEDSYHVNDATEDSVSSIKTQEDEPIEEELASCHSDEDDHQNEVLGDEEASKYDNLPVEMRSAKEGDESEGTIDSSVSSSTSSTPDDDEDDSATSYDSDDIEIQMFEYDLGTVCASASISIPRPSIIPKKNKKAEVNANEERMDDVSVSPGRSDSPGGGGGHSDSFQDPLDPGEQLGSDDEEQEDPRDYKRGGYHPVNIGDVFNSRYHVIRKLGWGHFSTVWLAWDTQEKRFTAMKIVKSAEHYTEAALDEIKLLLSVRGADPEDTGCHKVVQLLDEFTVTGINGQHVAMVFEVLGCNLLKLIIRSNYRGLHLEQVRKICKQILEALRYMHEKCGIIHTDIKPENVLITMSREEIKIMAQHAVVARKMNMKMSGSAVSTAPDHLVKMAQENMTKNKKKKMKKKAKKQREKLEAELAGLEGLKMDANGLQEAYNNAPQNGIRMRPPSLLFNGPIPQLLQGSSCVNTPSSPRSVPPPPALYPQAGGVCNQTYHLSQVILNEQVELESFNTSQVEDVNIEDAVNGNGNGTNNKIELKSPDRFDRTTLTPFSDPESKIGELASPSSEFLSSPMSMLPPGGVLPAPPVGPNIADPYCDIDVKIADLGNACWVNHHYTDDIQTRQYRALEVLIGSGYGPPADIWSTACMAFELATGDYLFEPHQGDNYSRDEDHLAHISELLGQISPSIYKKGKHWREFFHKNGNLLHIHNLKPWSLYEVLRQKYEWSHEDAQQFESFLRPMLDFDQEKRATANDALKHPFLLPFGGKAPRDPEVLQRLYPDGQVPEALDGNQEVYRDENDSNSASERSANRSAGSDDEEEFHMDRPGPSGVINEPADVSEIESFQLNLQ</sequence>
<reference key="1">
    <citation type="journal article" date="2003" name="PLoS Biol.">
        <title>The genome sequence of Caenorhabditis briggsae: a platform for comparative genomics.</title>
        <authorList>
            <person name="Stein L.D."/>
            <person name="Bao Z."/>
            <person name="Blasiar D."/>
            <person name="Blumenthal T."/>
            <person name="Brent M.R."/>
            <person name="Chen N."/>
            <person name="Chinwalla A."/>
            <person name="Clarke L."/>
            <person name="Clee C."/>
            <person name="Coghlan A."/>
            <person name="Coulson A."/>
            <person name="D'Eustachio P."/>
            <person name="Fitch D.H.A."/>
            <person name="Fulton L.A."/>
            <person name="Fulton R.E."/>
            <person name="Griffiths-Jones S."/>
            <person name="Harris T.W."/>
            <person name="Hillier L.W."/>
            <person name="Kamath R."/>
            <person name="Kuwabara P.E."/>
            <person name="Mardis E.R."/>
            <person name="Marra M.A."/>
            <person name="Miner T.L."/>
            <person name="Minx P."/>
            <person name="Mullikin J.C."/>
            <person name="Plumb R.W."/>
            <person name="Rogers J."/>
            <person name="Schein J.E."/>
            <person name="Sohrmann M."/>
            <person name="Spieth J."/>
            <person name="Stajich J.E."/>
            <person name="Wei C."/>
            <person name="Willey D."/>
            <person name="Wilson R.K."/>
            <person name="Durbin R.M."/>
            <person name="Waterston R.H."/>
        </authorList>
    </citation>
    <scope>NUCLEOTIDE SEQUENCE [LARGE SCALE GENOMIC DNA]</scope>
    <source>
        <strain>AF16</strain>
    </source>
</reference>
<comment type="function">
    <text evidence="1">Required for embryogenesis and germline development in both adult hermaphrodites and males. SR-protein kinase (SRPK) that binds directly to and phosphorylates RS domains (By similarity).</text>
</comment>
<comment type="catalytic activity">
    <reaction evidence="2">
        <text>L-seryl-[protein] + ATP = O-phospho-L-seryl-[protein] + ADP + H(+)</text>
        <dbReference type="Rhea" id="RHEA:17989"/>
        <dbReference type="Rhea" id="RHEA-COMP:9863"/>
        <dbReference type="Rhea" id="RHEA-COMP:11604"/>
        <dbReference type="ChEBI" id="CHEBI:15378"/>
        <dbReference type="ChEBI" id="CHEBI:29999"/>
        <dbReference type="ChEBI" id="CHEBI:30616"/>
        <dbReference type="ChEBI" id="CHEBI:83421"/>
        <dbReference type="ChEBI" id="CHEBI:456216"/>
        <dbReference type="EC" id="2.7.11.1"/>
    </reaction>
</comment>
<comment type="catalytic activity">
    <reaction evidence="2">
        <text>L-threonyl-[protein] + ATP = O-phospho-L-threonyl-[protein] + ADP + H(+)</text>
        <dbReference type="Rhea" id="RHEA:46608"/>
        <dbReference type="Rhea" id="RHEA-COMP:11060"/>
        <dbReference type="Rhea" id="RHEA-COMP:11605"/>
        <dbReference type="ChEBI" id="CHEBI:15378"/>
        <dbReference type="ChEBI" id="CHEBI:30013"/>
        <dbReference type="ChEBI" id="CHEBI:30616"/>
        <dbReference type="ChEBI" id="CHEBI:61977"/>
        <dbReference type="ChEBI" id="CHEBI:456216"/>
        <dbReference type="EC" id="2.7.11.1"/>
    </reaction>
</comment>
<comment type="subcellular location">
    <subcellularLocation>
        <location evidence="7">Membrane</location>
        <topology evidence="7">Single-pass membrane protein</topology>
    </subcellularLocation>
</comment>
<comment type="similarity">
    <text evidence="4">Belongs to the protein kinase superfamily. Ser/Thr protein kinase family.</text>
</comment>
<keyword id="KW-0067">ATP-binding</keyword>
<keyword id="KW-0418">Kinase</keyword>
<keyword id="KW-0472">Membrane</keyword>
<keyword id="KW-0547">Nucleotide-binding</keyword>
<keyword id="KW-1185">Reference proteome</keyword>
<keyword id="KW-0723">Serine/threonine-protein kinase</keyword>
<keyword id="KW-0808">Transferase</keyword>
<keyword id="KW-0812">Transmembrane</keyword>
<keyword id="KW-1133">Transmembrane helix</keyword>
<accession>Q61IS6</accession>
<accession>A8XAC9</accession>
<name>SPK1_CAEBR</name>
<evidence type="ECO:0000250" key="1"/>
<evidence type="ECO:0000250" key="2">
    <source>
        <dbReference type="UniProtKB" id="Q03563"/>
    </source>
</evidence>
<evidence type="ECO:0000255" key="3"/>
<evidence type="ECO:0000255" key="4">
    <source>
        <dbReference type="PROSITE-ProRule" id="PRU00159"/>
    </source>
</evidence>
<evidence type="ECO:0000255" key="5">
    <source>
        <dbReference type="PROSITE-ProRule" id="PRU10027"/>
    </source>
</evidence>
<evidence type="ECO:0000256" key="6">
    <source>
        <dbReference type="SAM" id="MobiDB-lite"/>
    </source>
</evidence>
<evidence type="ECO:0000305" key="7"/>
<gene>
    <name type="primary">spk-1</name>
    <name type="ORF">CBG10087</name>
</gene>
<protein>
    <recommendedName>
        <fullName>Serine/threonine-protein kinase spk-1</fullName>
        <ecNumber>2.7.11.1</ecNumber>
    </recommendedName>
</protein>
<proteinExistence type="inferred from homology"/>
<dbReference type="EC" id="2.7.11.1"/>
<dbReference type="EMBL" id="HE601459">
    <property type="protein sequence ID" value="CAP29597.2"/>
    <property type="molecule type" value="Genomic_DNA"/>
</dbReference>
<dbReference type="SMR" id="Q61IS6"/>
<dbReference type="FunCoup" id="Q61IS6">
    <property type="interactions" value="1984"/>
</dbReference>
<dbReference type="STRING" id="6238.Q61IS6"/>
<dbReference type="WormBase" id="CBG10087a">
    <property type="protein sequence ID" value="CBP42578"/>
    <property type="gene ID" value="WBGene00031566"/>
    <property type="gene designation" value="Cbr-spk-1"/>
</dbReference>
<dbReference type="eggNOG" id="KOG1290">
    <property type="taxonomic scope" value="Eukaryota"/>
</dbReference>
<dbReference type="HOGENOM" id="CLU_000288_81_0_1"/>
<dbReference type="InParanoid" id="Q61IS6"/>
<dbReference type="OMA" id="AWDTQEK"/>
<dbReference type="Proteomes" id="UP000008549">
    <property type="component" value="Unassembled WGS sequence"/>
</dbReference>
<dbReference type="GO" id="GO:0005737">
    <property type="term" value="C:cytoplasm"/>
    <property type="evidence" value="ECO:0000318"/>
    <property type="project" value="GO_Central"/>
</dbReference>
<dbReference type="GO" id="GO:0016020">
    <property type="term" value="C:membrane"/>
    <property type="evidence" value="ECO:0007669"/>
    <property type="project" value="UniProtKB-SubCell"/>
</dbReference>
<dbReference type="GO" id="GO:0005634">
    <property type="term" value="C:nucleus"/>
    <property type="evidence" value="ECO:0000318"/>
    <property type="project" value="GO_Central"/>
</dbReference>
<dbReference type="GO" id="GO:0005524">
    <property type="term" value="F:ATP binding"/>
    <property type="evidence" value="ECO:0007669"/>
    <property type="project" value="UniProtKB-KW"/>
</dbReference>
<dbReference type="GO" id="GO:0106310">
    <property type="term" value="F:protein serine kinase activity"/>
    <property type="evidence" value="ECO:0007669"/>
    <property type="project" value="RHEA"/>
</dbReference>
<dbReference type="GO" id="GO:0004674">
    <property type="term" value="F:protein serine/threonine kinase activity"/>
    <property type="evidence" value="ECO:0000250"/>
    <property type="project" value="UniProtKB"/>
</dbReference>
<dbReference type="GO" id="GO:0009792">
    <property type="term" value="P:embryo development ending in birth or egg hatching"/>
    <property type="evidence" value="ECO:0000250"/>
    <property type="project" value="UniProtKB"/>
</dbReference>
<dbReference type="GO" id="GO:0006468">
    <property type="term" value="P:protein phosphorylation"/>
    <property type="evidence" value="ECO:0000250"/>
    <property type="project" value="UniProtKB"/>
</dbReference>
<dbReference type="GO" id="GO:0050684">
    <property type="term" value="P:regulation of mRNA processing"/>
    <property type="evidence" value="ECO:0000318"/>
    <property type="project" value="GO_Central"/>
</dbReference>
<dbReference type="GO" id="GO:0000245">
    <property type="term" value="P:spliceosomal complex assembly"/>
    <property type="evidence" value="ECO:0000318"/>
    <property type="project" value="GO_Central"/>
</dbReference>
<dbReference type="FunFam" id="1.10.510.10:FF:001065">
    <property type="entry name" value="Serine/threonine-protein kinase spk-1"/>
    <property type="match status" value="1"/>
</dbReference>
<dbReference type="FunFam" id="1.10.510.10:FF:000642">
    <property type="entry name" value="Serine/threonine-protein kinase srpk2"/>
    <property type="match status" value="1"/>
</dbReference>
<dbReference type="FunFam" id="3.30.200.20:FF:000163">
    <property type="entry name" value="SRSF protein kinase 2 isoform X1"/>
    <property type="match status" value="1"/>
</dbReference>
<dbReference type="Gene3D" id="3.30.200.20">
    <property type="entry name" value="Phosphorylase Kinase, domain 1"/>
    <property type="match status" value="1"/>
</dbReference>
<dbReference type="Gene3D" id="1.10.510.10">
    <property type="entry name" value="Transferase(Phosphotransferase) domain 1"/>
    <property type="match status" value="1"/>
</dbReference>
<dbReference type="InterPro" id="IPR011009">
    <property type="entry name" value="Kinase-like_dom_sf"/>
</dbReference>
<dbReference type="InterPro" id="IPR000719">
    <property type="entry name" value="Prot_kinase_dom"/>
</dbReference>
<dbReference type="InterPro" id="IPR017441">
    <property type="entry name" value="Protein_kinase_ATP_BS"/>
</dbReference>
<dbReference type="InterPro" id="IPR008271">
    <property type="entry name" value="Ser/Thr_kinase_AS"/>
</dbReference>
<dbReference type="InterPro" id="IPR051334">
    <property type="entry name" value="SRPK"/>
</dbReference>
<dbReference type="PANTHER" id="PTHR47634">
    <property type="entry name" value="PROTEIN KINASE DOMAIN-CONTAINING PROTEIN-RELATED"/>
    <property type="match status" value="1"/>
</dbReference>
<dbReference type="PANTHER" id="PTHR47634:SF9">
    <property type="entry name" value="PROTEIN KINASE DOMAIN-CONTAINING PROTEIN-RELATED"/>
    <property type="match status" value="1"/>
</dbReference>
<dbReference type="Pfam" id="PF00069">
    <property type="entry name" value="Pkinase"/>
    <property type="match status" value="2"/>
</dbReference>
<dbReference type="SMART" id="SM00220">
    <property type="entry name" value="S_TKc"/>
    <property type="match status" value="1"/>
</dbReference>
<dbReference type="SUPFAM" id="SSF56112">
    <property type="entry name" value="Protein kinase-like (PK-like)"/>
    <property type="match status" value="1"/>
</dbReference>
<dbReference type="PROSITE" id="PS00107">
    <property type="entry name" value="PROTEIN_KINASE_ATP"/>
    <property type="match status" value="1"/>
</dbReference>
<dbReference type="PROSITE" id="PS50011">
    <property type="entry name" value="PROTEIN_KINASE_DOM"/>
    <property type="match status" value="1"/>
</dbReference>
<dbReference type="PROSITE" id="PS00108">
    <property type="entry name" value="PROTEIN_KINASE_ST"/>
    <property type="match status" value="1"/>
</dbReference>
<organism>
    <name type="scientific">Caenorhabditis briggsae</name>
    <dbReference type="NCBI Taxonomy" id="6238"/>
    <lineage>
        <taxon>Eukaryota</taxon>
        <taxon>Metazoa</taxon>
        <taxon>Ecdysozoa</taxon>
        <taxon>Nematoda</taxon>
        <taxon>Chromadorea</taxon>
        <taxon>Rhabditida</taxon>
        <taxon>Rhabditina</taxon>
        <taxon>Rhabditomorpha</taxon>
        <taxon>Rhabditoidea</taxon>
        <taxon>Rhabditidae</taxon>
        <taxon>Peloderinae</taxon>
        <taxon>Caenorhabditis</taxon>
    </lineage>
</organism>